<accession>P21947</accession>
<accession>O11842</accession>
<dbReference type="EC" id="2.7.7.-"/>
<dbReference type="EC" id="3.1.21.-"/>
<dbReference type="EMBL" id="X15983">
    <property type="protein sequence ID" value="CAA34111.2"/>
    <property type="molecule type" value="Genomic_DNA"/>
</dbReference>
<dbReference type="PIR" id="A36214">
    <property type="entry name" value="QQCVW1"/>
</dbReference>
<dbReference type="SMR" id="P21947"/>
<dbReference type="KEGG" id="vg:956371"/>
<dbReference type="Proteomes" id="UP000006885">
    <property type="component" value="Genome"/>
</dbReference>
<dbReference type="GO" id="GO:0042025">
    <property type="term" value="C:host cell nucleus"/>
    <property type="evidence" value="ECO:0007669"/>
    <property type="project" value="UniProtKB-SubCell"/>
</dbReference>
<dbReference type="GO" id="GO:0005524">
    <property type="term" value="F:ATP binding"/>
    <property type="evidence" value="ECO:0007669"/>
    <property type="project" value="UniProtKB-KW"/>
</dbReference>
<dbReference type="GO" id="GO:0003677">
    <property type="term" value="F:DNA binding"/>
    <property type="evidence" value="ECO:0007669"/>
    <property type="project" value="UniProtKB-KW"/>
</dbReference>
<dbReference type="GO" id="GO:0016888">
    <property type="term" value="F:endodeoxyribonuclease activity, producing 5'-phosphomonoesters"/>
    <property type="evidence" value="ECO:0007669"/>
    <property type="project" value="InterPro"/>
</dbReference>
<dbReference type="GO" id="GO:0004386">
    <property type="term" value="F:helicase activity"/>
    <property type="evidence" value="ECO:0007669"/>
    <property type="project" value="UniProtKB-KW"/>
</dbReference>
<dbReference type="GO" id="GO:0046872">
    <property type="term" value="F:metal ion binding"/>
    <property type="evidence" value="ECO:0007669"/>
    <property type="project" value="UniProtKB-KW"/>
</dbReference>
<dbReference type="GO" id="GO:0016779">
    <property type="term" value="F:nucleotidyltransferase activity"/>
    <property type="evidence" value="ECO:0007669"/>
    <property type="project" value="UniProtKB-KW"/>
</dbReference>
<dbReference type="GO" id="GO:0005198">
    <property type="term" value="F:structural molecule activity"/>
    <property type="evidence" value="ECO:0007669"/>
    <property type="project" value="InterPro"/>
</dbReference>
<dbReference type="GO" id="GO:0006260">
    <property type="term" value="P:DNA replication"/>
    <property type="evidence" value="ECO:0007669"/>
    <property type="project" value="UniProtKB-KW"/>
</dbReference>
<dbReference type="FunFam" id="3.40.1310.20:FF:000001">
    <property type="entry name" value="Replication-associated protein"/>
    <property type="match status" value="1"/>
</dbReference>
<dbReference type="Gene3D" id="3.40.1310.20">
    <property type="match status" value="1"/>
</dbReference>
<dbReference type="InterPro" id="IPR049912">
    <property type="entry name" value="CRESS_DNA_REP"/>
</dbReference>
<dbReference type="InterPro" id="IPR001301">
    <property type="entry name" value="Gemini_AL1_CLV"/>
</dbReference>
<dbReference type="InterPro" id="IPR001191">
    <property type="entry name" value="Gemini_AL1_REP"/>
</dbReference>
<dbReference type="InterPro" id="IPR022692">
    <property type="entry name" value="Gemini_AL1_REP_central"/>
</dbReference>
<dbReference type="Pfam" id="PF00799">
    <property type="entry name" value="Gemini_AL1"/>
    <property type="match status" value="1"/>
</dbReference>
<dbReference type="Pfam" id="PF08283">
    <property type="entry name" value="Gemini_AL1_M"/>
    <property type="match status" value="1"/>
</dbReference>
<dbReference type="PRINTS" id="PR00227">
    <property type="entry name" value="GEMCOATAL1"/>
</dbReference>
<dbReference type="PRINTS" id="PR00228">
    <property type="entry name" value="GEMCOATCLVL1"/>
</dbReference>
<dbReference type="SUPFAM" id="SSF55464">
    <property type="entry name" value="Origin of replication-binding domain, RBD-like"/>
    <property type="match status" value="1"/>
</dbReference>
<dbReference type="PROSITE" id="PS52020">
    <property type="entry name" value="CRESS_DNA_REP"/>
    <property type="match status" value="1"/>
</dbReference>
<comment type="function">
    <text evidence="1">Essential for the replication of viral ssDNA. The closed circular ssDNA genome is first converted to a superhelical dsDNA. Rep binds a specific region at the genome origin of replication. It introduces an endonucleolytic nick within the conserved sequence 5'-TAATATTAC-3' in the intergenic region of the genome present in all geminiviruses, thereby initiating the rolling circle replication (RCR). Following cleavage, binds covalently to the 5'-phosphate of DNA as a tyrosyl ester. The cleavage gives rise to a free 3'-OH that serves as a primer for the cellular DNA polymerase. The polymerase synthesizes the (+) strand DNA by rolling circle mechanism. After one round of replication, a Rep-catalyzed nucleotidyl transfer reaction releases a circular single-stranded virus genome, thereby terminating the replication. Displays origin-specific DNA cleavage, nucleotidyl transferase, ATPase and helicase activities (By similarity).</text>
</comment>
<comment type="cofactor">
    <cofactor evidence="3">
        <name>Mg(2+)</name>
        <dbReference type="ChEBI" id="CHEBI:18420"/>
    </cofactor>
    <cofactor evidence="3">
        <name>Mn(2+)</name>
        <dbReference type="ChEBI" id="CHEBI:29035"/>
    </cofactor>
    <text evidence="3">Divalent metal cations, possibly Mg(2+) or Mn(2+).</text>
</comment>
<comment type="subunit">
    <text evidence="1">Homooligomer. Interacts with the replication enhancer protein (REn). Interacts with host retinoblastoma-related protein 1 (RBR1), and may thereby induce the transcription of host replicative enzymes even if the cell is not dividing anymore. Interacts with host PCNA. Interacts with host SCE1 protein (By similarity).</text>
</comment>
<comment type="subcellular location">
    <subcellularLocation>
        <location evidence="1">Host nucleus</location>
    </subcellularLocation>
</comment>
<comment type="domain">
    <text evidence="1">There are 3 rolling circle replication (RCR) motifs. RCR-2 is probably involved in metal coordination. RCR-3 is required for phosphodiester bond cleavage for initiation of RCR (By similarity).</text>
</comment>
<comment type="similarity">
    <text evidence="4">Belongs to the geminiviridae Rep protein family.</text>
</comment>
<feature type="chain" id="PRO_0000222200" description="Replication-associated protein">
    <location>
        <begin position="1"/>
        <end position="356"/>
    </location>
</feature>
<feature type="domain" description="CRESS-DNA virus Rep endonuclease" evidence="3">
    <location>
        <begin position="8"/>
        <end position="116"/>
    </location>
</feature>
<feature type="region of interest" description="Binding to RBR1" evidence="1">
    <location>
        <begin position="143"/>
        <end position="153"/>
    </location>
</feature>
<feature type="region of interest" description="Oligomerization" evidence="1">
    <location>
        <begin position="156"/>
        <end position="176"/>
    </location>
</feature>
<feature type="short sequence motif" description="RCR-1" evidence="3">
    <location>
        <begin position="15"/>
        <end position="18"/>
    </location>
</feature>
<feature type="short sequence motif" description="RCR-2" evidence="3">
    <location>
        <begin position="57"/>
        <end position="59"/>
    </location>
</feature>
<feature type="short sequence motif" description="RCR-3" evidence="3">
    <location>
        <begin position="103"/>
        <end position="106"/>
    </location>
</feature>
<feature type="active site" description="For DNA cleavage activity" evidence="3">
    <location>
        <position position="103"/>
    </location>
</feature>
<feature type="binding site" evidence="3">
    <location>
        <position position="49"/>
    </location>
    <ligand>
        <name>a divalent metal cation</name>
        <dbReference type="ChEBI" id="CHEBI:60240"/>
    </ligand>
</feature>
<feature type="binding site" evidence="3">
    <location>
        <position position="57"/>
    </location>
    <ligand>
        <name>a divalent metal cation</name>
        <dbReference type="ChEBI" id="CHEBI:60240"/>
    </ligand>
</feature>
<feature type="binding site" evidence="3">
    <location>
        <position position="59"/>
    </location>
    <ligand>
        <name>a divalent metal cation</name>
        <dbReference type="ChEBI" id="CHEBI:60240"/>
    </ligand>
</feature>
<feature type="binding site" evidence="3">
    <location>
        <position position="107"/>
    </location>
    <ligand>
        <name>a divalent metal cation</name>
        <dbReference type="ChEBI" id="CHEBI:60240"/>
    </ligand>
</feature>
<feature type="binding site" evidence="2">
    <location>
        <begin position="221"/>
        <end position="228"/>
    </location>
    <ligand>
        <name>ATP</name>
        <dbReference type="ChEBI" id="CHEBI:30616"/>
    </ligand>
</feature>
<name>REP_ABMVW</name>
<gene>
    <name type="ORF">AC1</name>
    <name type="ORF">AL1</name>
</gene>
<protein>
    <recommendedName>
        <fullName>Replication-associated protein</fullName>
        <shortName>Rep</shortName>
        <ecNumber>2.7.7.-</ecNumber>
        <ecNumber>3.1.21.-</ecNumber>
    </recommendedName>
    <alternativeName>
        <fullName>Protein AC1</fullName>
    </alternativeName>
    <alternativeName>
        <fullName>Protein AL1</fullName>
    </alternativeName>
</protein>
<organismHost>
    <name type="scientific">Abutilon</name>
    <dbReference type="NCBI Taxonomy" id="3630"/>
</organismHost>
<organismHost>
    <name type="scientific">Gossypium hirsutum</name>
    <name type="common">Upland cotton</name>
    <name type="synonym">Gossypium mexicanum</name>
    <dbReference type="NCBI Taxonomy" id="3635"/>
</organismHost>
<organismHost>
    <name type="scientific">Hibiscus</name>
    <dbReference type="NCBI Taxonomy" id="47605"/>
</organismHost>
<organismHost>
    <name type="scientific">Malva</name>
    <dbReference type="NCBI Taxonomy" id="96479"/>
</organismHost>
<organismHost>
    <name type="scientific">Phaseolus vulgaris</name>
    <name type="common">Kidney bean</name>
    <name type="synonym">French bean</name>
    <dbReference type="NCBI Taxonomy" id="3885"/>
</organismHost>
<organismHost>
    <name type="scientific">Sida</name>
    <dbReference type="NCBI Taxonomy" id="108335"/>
</organismHost>
<sequence>MPPPKKFRVQAKNYFLTYPQCSLTKDEALSQLQNLETPVNKKFIKICRELHENGEPHLHVLIQFEGKYQCTNNRFFDLVSPTRSAHFHPNIQGAKSSSDVKSYIDKDGDTAEWGEFQIDGRSARGGQQTANDSYAKALNAGDVQSALNILKEEQPKDYVLQNHNIRSNLERIFAKAPEPWVPRFPLSSFTAVPEEMQEWADDYFGSGSAARPDRPLSLIVEGDSRTGKTMWARALGPHNYLSGHLDFNGRVYSNEVEYNVIDDVAPHYLKLKHWKELLGAQKDWQSNCKYGKPVQIKGGIPAIVLCNPGEGSSYKEYLDKEENTGLRNWTLKNAIFITLTAPLYQEGTQAGQEEGH</sequence>
<evidence type="ECO:0000250" key="1"/>
<evidence type="ECO:0000255" key="2"/>
<evidence type="ECO:0000255" key="3">
    <source>
        <dbReference type="PROSITE-ProRule" id="PRU01364"/>
    </source>
</evidence>
<evidence type="ECO:0000305" key="4"/>
<reference key="1">
    <citation type="journal article" date="1990" name="Virology">
        <title>The nucleotide sequence of abutilon mosaic virus reveals prokaryotic as well as eukaryotic features.</title>
        <authorList>
            <person name="Frischmuth T."/>
            <person name="Zimmat G."/>
            <person name="Jeske H."/>
        </authorList>
    </citation>
    <scope>NUCLEOTIDE SEQUENCE [GENOMIC DNA]</scope>
</reference>
<reference key="2">
    <citation type="submission" date="2003-11" db="EMBL/GenBank/DDBJ databases">
        <authorList>
            <person name="Jeske H."/>
        </authorList>
    </citation>
    <scope>SEQUENCE REVISION</scope>
</reference>
<keyword id="KW-0067">ATP-binding</keyword>
<keyword id="KW-0190">Covalent protein-DNA linkage</keyword>
<keyword id="KW-0235">DNA replication</keyword>
<keyword id="KW-0238">DNA-binding</keyword>
<keyword id="KW-0255">Endonuclease</keyword>
<keyword id="KW-0347">Helicase</keyword>
<keyword id="KW-1048">Host nucleus</keyword>
<keyword id="KW-0945">Host-virus interaction</keyword>
<keyword id="KW-0378">Hydrolase</keyword>
<keyword id="KW-0479">Metal-binding</keyword>
<keyword id="KW-0511">Multifunctional enzyme</keyword>
<keyword id="KW-0540">Nuclease</keyword>
<keyword id="KW-0547">Nucleotide-binding</keyword>
<keyword id="KW-0548">Nucleotidyltransferase</keyword>
<keyword id="KW-1185">Reference proteome</keyword>
<keyword id="KW-0808">Transferase</keyword>
<proteinExistence type="inferred from homology"/>
<organism>
    <name type="scientific">Abutilon mosaic virus (isolate West India)</name>
    <name type="common">AbMV</name>
    <dbReference type="NCBI Taxonomy" id="10816"/>
    <lineage>
        <taxon>Viruses</taxon>
        <taxon>Monodnaviria</taxon>
        <taxon>Shotokuvirae</taxon>
        <taxon>Cressdnaviricota</taxon>
        <taxon>Repensiviricetes</taxon>
        <taxon>Geplafuvirales</taxon>
        <taxon>Geminiviridae</taxon>
        <taxon>Begomovirus</taxon>
        <taxon>Begomovirus bauri</taxon>
    </lineage>
</organism>